<organism>
    <name type="scientific">Mus musculus</name>
    <name type="common">Mouse</name>
    <dbReference type="NCBI Taxonomy" id="10090"/>
    <lineage>
        <taxon>Eukaryota</taxon>
        <taxon>Metazoa</taxon>
        <taxon>Chordata</taxon>
        <taxon>Craniata</taxon>
        <taxon>Vertebrata</taxon>
        <taxon>Euteleostomi</taxon>
        <taxon>Mammalia</taxon>
        <taxon>Eutheria</taxon>
        <taxon>Euarchontoglires</taxon>
        <taxon>Glires</taxon>
        <taxon>Rodentia</taxon>
        <taxon>Myomorpha</taxon>
        <taxon>Muroidea</taxon>
        <taxon>Muridae</taxon>
        <taxon>Murinae</taxon>
        <taxon>Mus</taxon>
        <taxon>Mus</taxon>
    </lineage>
</organism>
<name>ANR45_MOUSE</name>
<feature type="chain" id="PRO_0000244575" description="Ankyrin repeat domain-containing protein 45">
    <location>
        <begin position="1"/>
        <end position="248"/>
    </location>
</feature>
<feature type="repeat" description="ANK 1">
    <location>
        <begin position="75"/>
        <end position="104"/>
    </location>
</feature>
<feature type="repeat" description="ANK 2">
    <location>
        <begin position="108"/>
        <end position="137"/>
    </location>
</feature>
<feature type="region of interest" description="Disordered" evidence="2">
    <location>
        <begin position="1"/>
        <end position="42"/>
    </location>
</feature>
<feature type="compositionally biased region" description="Acidic residues" evidence="2">
    <location>
        <begin position="1"/>
        <end position="10"/>
    </location>
</feature>
<feature type="compositionally biased region" description="Acidic residues" evidence="2">
    <location>
        <begin position="22"/>
        <end position="33"/>
    </location>
</feature>
<protein>
    <recommendedName>
        <fullName>Ankyrin repeat domain-containing protein 45</fullName>
    </recommendedName>
</protein>
<gene>
    <name type="primary">Ankrd45</name>
</gene>
<accession>Q810N6</accession>
<reference key="1">
    <citation type="journal article" date="2004" name="Genome Res.">
        <title>The status, quality, and expansion of the NIH full-length cDNA project: the Mammalian Gene Collection (MGC).</title>
        <authorList>
            <consortium name="The MGC Project Team"/>
        </authorList>
    </citation>
    <scope>NUCLEOTIDE SEQUENCE [LARGE SCALE MRNA]</scope>
    <source>
        <tissue>Testis</tissue>
    </source>
</reference>
<reference key="2">
    <citation type="journal article" date="2010" name="Cell">
        <title>A tissue-specific atlas of mouse protein phosphorylation and expression.</title>
        <authorList>
            <person name="Huttlin E.L."/>
            <person name="Jedrychowski M.P."/>
            <person name="Elias J.E."/>
            <person name="Goswami T."/>
            <person name="Rad R."/>
            <person name="Beausoleil S.A."/>
            <person name="Villen J."/>
            <person name="Haas W."/>
            <person name="Sowa M.E."/>
            <person name="Gygi S.P."/>
        </authorList>
    </citation>
    <scope>IDENTIFICATION BY MASS SPECTROMETRY [LARGE SCALE ANALYSIS]</scope>
    <source>
        <tissue>Testis</tissue>
    </source>
</reference>
<comment type="function">
    <text evidence="1">May play a role during cell division.</text>
</comment>
<comment type="subcellular location">
    <subcellularLocation>
        <location evidence="1">Cytoplasm</location>
    </subcellularLocation>
    <subcellularLocation>
        <location evidence="1">Midbody</location>
        <location evidence="1">Midbody ring</location>
    </subcellularLocation>
    <subcellularLocation>
        <location evidence="1">Cleavage furrow</location>
    </subcellularLocation>
    <text evidence="1">Distribution is highly dynamic during mitosis. Not detected during interphase, localized to cytoplasm during metaphase, to cleavage furrow during anaphase and telophase, and to midbody ring during cytokinesis.</text>
</comment>
<evidence type="ECO:0000250" key="1">
    <source>
        <dbReference type="UniProtKB" id="Q5TZF3"/>
    </source>
</evidence>
<evidence type="ECO:0000256" key="2">
    <source>
        <dbReference type="SAM" id="MobiDB-lite"/>
    </source>
</evidence>
<proteinExistence type="evidence at protein level"/>
<dbReference type="EMBL" id="BC049713">
    <property type="protein sequence ID" value="AAH49713.1"/>
    <property type="molecule type" value="mRNA"/>
</dbReference>
<dbReference type="CCDS" id="CCDS87902.1"/>
<dbReference type="RefSeq" id="NP_001355695.1">
    <property type="nucleotide sequence ID" value="NM_001368766.1"/>
</dbReference>
<dbReference type="RefSeq" id="NP_082940.1">
    <property type="nucleotide sequence ID" value="NM_028664.1"/>
</dbReference>
<dbReference type="RefSeq" id="XP_017167975.1">
    <property type="nucleotide sequence ID" value="XM_017312486.3"/>
</dbReference>
<dbReference type="RefSeq" id="XP_030099052.1">
    <property type="nucleotide sequence ID" value="XM_030243192.2"/>
</dbReference>
<dbReference type="SMR" id="Q810N6"/>
<dbReference type="BioGRID" id="216295">
    <property type="interactions" value="1"/>
</dbReference>
<dbReference type="FunCoup" id="Q810N6">
    <property type="interactions" value="11"/>
</dbReference>
<dbReference type="STRING" id="10090.ENSMUSP00000059923"/>
<dbReference type="iPTMnet" id="Q810N6"/>
<dbReference type="PhosphoSitePlus" id="Q810N6"/>
<dbReference type="PaxDb" id="10090-ENSMUSP00000059923"/>
<dbReference type="ProteomicsDB" id="296257"/>
<dbReference type="Ensembl" id="ENSMUST00000111608.8">
    <property type="protein sequence ID" value="ENSMUSP00000107235.2"/>
    <property type="gene ID" value="ENSMUSG00000044835.16"/>
</dbReference>
<dbReference type="GeneID" id="73844"/>
<dbReference type="KEGG" id="mmu:73844"/>
<dbReference type="AGR" id="MGI:1921094"/>
<dbReference type="CTD" id="339416"/>
<dbReference type="MGI" id="MGI:1921094">
    <property type="gene designation" value="Ankrd45"/>
</dbReference>
<dbReference type="VEuPathDB" id="HostDB:ENSMUSG00000044835"/>
<dbReference type="eggNOG" id="KOG0100">
    <property type="taxonomic scope" value="Eukaryota"/>
</dbReference>
<dbReference type="GeneTree" id="ENSGT00390000008829"/>
<dbReference type="InParanoid" id="Q810N6"/>
<dbReference type="OMA" id="ATPRKFW"/>
<dbReference type="OrthoDB" id="194358at2759"/>
<dbReference type="PhylomeDB" id="Q810N6"/>
<dbReference type="BioGRID-ORCS" id="73844">
    <property type="hits" value="0 hits in 77 CRISPR screens"/>
</dbReference>
<dbReference type="PRO" id="PR:Q810N6"/>
<dbReference type="Proteomes" id="UP000000589">
    <property type="component" value="Chromosome 1"/>
</dbReference>
<dbReference type="RNAct" id="Q810N6">
    <property type="molecule type" value="protein"/>
</dbReference>
<dbReference type="Bgee" id="ENSMUSG00000044835">
    <property type="expression patterns" value="Expressed in superior cervical ganglion and 74 other cell types or tissues"/>
</dbReference>
<dbReference type="ExpressionAtlas" id="Q810N6">
    <property type="expression patterns" value="baseline and differential"/>
</dbReference>
<dbReference type="GO" id="GO:0032154">
    <property type="term" value="C:cleavage furrow"/>
    <property type="evidence" value="ECO:0000250"/>
    <property type="project" value="UniProtKB"/>
</dbReference>
<dbReference type="GO" id="GO:0005737">
    <property type="term" value="C:cytoplasm"/>
    <property type="evidence" value="ECO:0000250"/>
    <property type="project" value="UniProtKB"/>
</dbReference>
<dbReference type="GO" id="GO:0090543">
    <property type="term" value="C:Flemming body"/>
    <property type="evidence" value="ECO:0007669"/>
    <property type="project" value="UniProtKB-SubCell"/>
</dbReference>
<dbReference type="GO" id="GO:0030496">
    <property type="term" value="C:midbody"/>
    <property type="evidence" value="ECO:0000250"/>
    <property type="project" value="UniProtKB"/>
</dbReference>
<dbReference type="GO" id="GO:0008283">
    <property type="term" value="P:cell population proliferation"/>
    <property type="evidence" value="ECO:0000250"/>
    <property type="project" value="UniProtKB"/>
</dbReference>
<dbReference type="Gene3D" id="1.20.1270.10">
    <property type="match status" value="1"/>
</dbReference>
<dbReference type="Gene3D" id="1.25.40.20">
    <property type="entry name" value="Ankyrin repeat-containing domain"/>
    <property type="match status" value="1"/>
</dbReference>
<dbReference type="InterPro" id="IPR050776">
    <property type="entry name" value="Ank_Repeat/CDKN_Inhibitor"/>
</dbReference>
<dbReference type="InterPro" id="IPR002110">
    <property type="entry name" value="Ankyrin_rpt"/>
</dbReference>
<dbReference type="InterPro" id="IPR036770">
    <property type="entry name" value="Ankyrin_rpt-contain_sf"/>
</dbReference>
<dbReference type="InterPro" id="IPR029048">
    <property type="entry name" value="HSP70_C_sf"/>
</dbReference>
<dbReference type="PANTHER" id="PTHR24201">
    <property type="entry name" value="ANK_REP_REGION DOMAIN-CONTAINING PROTEIN"/>
    <property type="match status" value="1"/>
</dbReference>
<dbReference type="PANTHER" id="PTHR24201:SF15">
    <property type="entry name" value="ANKYRIN REPEAT DOMAIN-CONTAINING PROTEIN 66"/>
    <property type="match status" value="1"/>
</dbReference>
<dbReference type="Pfam" id="PF12796">
    <property type="entry name" value="Ank_2"/>
    <property type="match status" value="1"/>
</dbReference>
<dbReference type="SMART" id="SM00248">
    <property type="entry name" value="ANK"/>
    <property type="match status" value="2"/>
</dbReference>
<dbReference type="SUPFAM" id="SSF48403">
    <property type="entry name" value="Ankyrin repeat"/>
    <property type="match status" value="1"/>
</dbReference>
<dbReference type="SUPFAM" id="SSF100934">
    <property type="entry name" value="Heat shock protein 70kD (HSP70), C-terminal subdomain"/>
    <property type="match status" value="1"/>
</dbReference>
<dbReference type="PROSITE" id="PS50297">
    <property type="entry name" value="ANK_REP_REGION"/>
    <property type="match status" value="1"/>
</dbReference>
<dbReference type="PROSITE" id="PS50088">
    <property type="entry name" value="ANK_REPEAT"/>
    <property type="match status" value="2"/>
</dbReference>
<keyword id="KW-0040">ANK repeat</keyword>
<keyword id="KW-0963">Cytoplasm</keyword>
<keyword id="KW-1185">Reference proteome</keyword>
<keyword id="KW-0677">Repeat</keyword>
<sequence length="248" mass="27734">MEPEETLESESSEKSLFSSQQEYEESQEAEETGAENPLLQPTLTGDVEGLQKIFEDPEHPHHEHAVQLLLEEDIVGRNLLYAACMAGKSDVIKALAKYGVNLNEATARGYTLLHCAAAWGRLETLKALVELDVDIEALNFRGEKARDVAARYSQVECVNFLDWADARLILKKIITKSSLIITDPEKGPGKLFKEDKSTILNACRLKNEWLESHPEASISEIFEQKQQLEDIVSPILAKMSTPRHFAAS</sequence>